<evidence type="ECO:0000255" key="1">
    <source>
        <dbReference type="HAMAP-Rule" id="MF_01636"/>
    </source>
</evidence>
<proteinExistence type="inferred from homology"/>
<comment type="function">
    <text evidence="1">Catalyzes the decarboxylation of 3-octaprenyl-4-hydroxy benzoate to 2-octaprenylphenol, an intermediate step in ubiquinone biosynthesis.</text>
</comment>
<comment type="catalytic activity">
    <reaction evidence="1">
        <text>a 4-hydroxy-3-(all-trans-polyprenyl)benzoate + H(+) = a 2-(all-trans-polyprenyl)phenol + CO2</text>
        <dbReference type="Rhea" id="RHEA:41680"/>
        <dbReference type="Rhea" id="RHEA-COMP:9514"/>
        <dbReference type="Rhea" id="RHEA-COMP:9516"/>
        <dbReference type="ChEBI" id="CHEBI:1269"/>
        <dbReference type="ChEBI" id="CHEBI:15378"/>
        <dbReference type="ChEBI" id="CHEBI:16526"/>
        <dbReference type="ChEBI" id="CHEBI:78396"/>
        <dbReference type="EC" id="4.1.1.98"/>
    </reaction>
</comment>
<comment type="cofactor">
    <cofactor evidence="1">
        <name>prenylated FMN</name>
        <dbReference type="ChEBI" id="CHEBI:87746"/>
    </cofactor>
    <text evidence="1">Binds 1 prenylated FMN per subunit.</text>
</comment>
<comment type="cofactor">
    <cofactor evidence="1">
        <name>Mn(2+)</name>
        <dbReference type="ChEBI" id="CHEBI:29035"/>
    </cofactor>
</comment>
<comment type="pathway">
    <text evidence="1">Cofactor biosynthesis; ubiquinone biosynthesis.</text>
</comment>
<comment type="subunit">
    <text evidence="1">Homohexamer.</text>
</comment>
<comment type="subcellular location">
    <subcellularLocation>
        <location evidence="1">Cell membrane</location>
        <topology evidence="1">Peripheral membrane protein</topology>
    </subcellularLocation>
</comment>
<comment type="similarity">
    <text evidence="1">Belongs to the UbiD family.</text>
</comment>
<organism>
    <name type="scientific">Aeromonas salmonicida (strain A449)</name>
    <dbReference type="NCBI Taxonomy" id="382245"/>
    <lineage>
        <taxon>Bacteria</taxon>
        <taxon>Pseudomonadati</taxon>
        <taxon>Pseudomonadota</taxon>
        <taxon>Gammaproteobacteria</taxon>
        <taxon>Aeromonadales</taxon>
        <taxon>Aeromonadaceae</taxon>
        <taxon>Aeromonas</taxon>
    </lineage>
</organism>
<feature type="chain" id="PRO_1000069842" description="3-octaprenyl-4-hydroxybenzoate carboxy-lyase">
    <location>
        <begin position="1"/>
        <end position="489"/>
    </location>
</feature>
<feature type="active site" description="Proton donor" evidence="1">
    <location>
        <position position="287"/>
    </location>
</feature>
<feature type="binding site" evidence="1">
    <location>
        <position position="172"/>
    </location>
    <ligand>
        <name>Mn(2+)</name>
        <dbReference type="ChEBI" id="CHEBI:29035"/>
    </ligand>
</feature>
<feature type="binding site" evidence="1">
    <location>
        <begin position="175"/>
        <end position="177"/>
    </location>
    <ligand>
        <name>prenylated FMN</name>
        <dbReference type="ChEBI" id="CHEBI:87746"/>
    </ligand>
</feature>
<feature type="binding site" evidence="1">
    <location>
        <begin position="189"/>
        <end position="191"/>
    </location>
    <ligand>
        <name>prenylated FMN</name>
        <dbReference type="ChEBI" id="CHEBI:87746"/>
    </ligand>
</feature>
<feature type="binding site" evidence="1">
    <location>
        <begin position="194"/>
        <end position="195"/>
    </location>
    <ligand>
        <name>prenylated FMN</name>
        <dbReference type="ChEBI" id="CHEBI:87746"/>
    </ligand>
</feature>
<feature type="binding site" evidence="1">
    <location>
        <position position="238"/>
    </location>
    <ligand>
        <name>Mn(2+)</name>
        <dbReference type="ChEBI" id="CHEBI:29035"/>
    </ligand>
</feature>
<keyword id="KW-1003">Cell membrane</keyword>
<keyword id="KW-0210">Decarboxylase</keyword>
<keyword id="KW-0285">Flavoprotein</keyword>
<keyword id="KW-0288">FMN</keyword>
<keyword id="KW-0456">Lyase</keyword>
<keyword id="KW-0464">Manganese</keyword>
<keyword id="KW-0472">Membrane</keyword>
<keyword id="KW-0479">Metal-binding</keyword>
<keyword id="KW-0831">Ubiquinone biosynthesis</keyword>
<name>UBID_AERS4</name>
<reference key="1">
    <citation type="journal article" date="2008" name="BMC Genomics">
        <title>The genome of Aeromonas salmonicida subsp. salmonicida A449: insights into the evolution of a fish pathogen.</title>
        <authorList>
            <person name="Reith M.E."/>
            <person name="Singh R.K."/>
            <person name="Curtis B."/>
            <person name="Boyd J.M."/>
            <person name="Bouevitch A."/>
            <person name="Kimball J."/>
            <person name="Munholland J."/>
            <person name="Murphy C."/>
            <person name="Sarty D."/>
            <person name="Williams J."/>
            <person name="Nash J.H."/>
            <person name="Johnson S.C."/>
            <person name="Brown L.L."/>
        </authorList>
    </citation>
    <scope>NUCLEOTIDE SEQUENCE [LARGE SCALE GENOMIC DNA]</scope>
    <source>
        <strain>A449</strain>
    </source>
</reference>
<sequence length="489" mass="55086">MKYKDLRDFIAQLEQNGQLKRITREIDPYLEMTEISDRTLRAGGPALLFENPKGYSMPVLTNLFGTPDRVAMGMGQPNVGALRQVGTWLSYLKEPEPPRGLKELMEKLPIFKQVLNMPTKRLSSAPCQQLVLEGEAVDLDQIPIQHCWPGDVAPLVTWGLTITRGPYKKRQNLGIYRQQKIGKNKLIMRWLDHRGGAIDFREWQEAHPGERFPVVVALGADPATILGAVTPVPDSLSEYAFAGLLRGSRTEVVKALSCDLEVPASAEIVLEGYLEPGELAPEGPYGDHTGYYNEVDEFPVFTITHMTMRRDAIYHSTYTGRPPDEPAVLGVALNEVFVPLLQKQFPEIVDFYLPPEGCSYRMAVVTIKKRYPGHAKRVMLGVWSFLRQFMYTKFVIVCDDDINARDWKDVIWAITTRMDPARDTTLIEHTPIDYLDFASPVSGLGSKMGLDATNKWPGETNREWGQPIVQDEAVKQKVDSIWAELNILG</sequence>
<accession>A4STJ3</accession>
<gene>
    <name evidence="1" type="primary">ubiD</name>
    <name type="ordered locus">ASA_4291</name>
</gene>
<protein>
    <recommendedName>
        <fullName evidence="1">3-octaprenyl-4-hydroxybenzoate carboxy-lyase</fullName>
        <ecNumber evidence="1">4.1.1.98</ecNumber>
    </recommendedName>
    <alternativeName>
        <fullName evidence="1">Polyprenyl p-hydroxybenzoate decarboxylase</fullName>
    </alternativeName>
</protein>
<dbReference type="EC" id="4.1.1.98" evidence="1"/>
<dbReference type="EMBL" id="CP000644">
    <property type="protein sequence ID" value="ABO92215.1"/>
    <property type="molecule type" value="Genomic_DNA"/>
</dbReference>
<dbReference type="RefSeq" id="WP_005320666.1">
    <property type="nucleotide sequence ID" value="NC_009348.1"/>
</dbReference>
<dbReference type="SMR" id="A4STJ3"/>
<dbReference type="STRING" id="29491.GCA_000820065_02806"/>
<dbReference type="GeneID" id="79881981"/>
<dbReference type="KEGG" id="asa:ASA_4291"/>
<dbReference type="eggNOG" id="COG0043">
    <property type="taxonomic scope" value="Bacteria"/>
</dbReference>
<dbReference type="HOGENOM" id="CLU_023348_4_1_6"/>
<dbReference type="UniPathway" id="UPA00232"/>
<dbReference type="Proteomes" id="UP000000225">
    <property type="component" value="Chromosome"/>
</dbReference>
<dbReference type="GO" id="GO:0005829">
    <property type="term" value="C:cytosol"/>
    <property type="evidence" value="ECO:0007669"/>
    <property type="project" value="TreeGrafter"/>
</dbReference>
<dbReference type="GO" id="GO:0005886">
    <property type="term" value="C:plasma membrane"/>
    <property type="evidence" value="ECO:0007669"/>
    <property type="project" value="UniProtKB-SubCell"/>
</dbReference>
<dbReference type="GO" id="GO:0008694">
    <property type="term" value="F:3-octaprenyl-4-hydroxybenzoate carboxy-lyase activity"/>
    <property type="evidence" value="ECO:0007669"/>
    <property type="project" value="UniProtKB-UniRule"/>
</dbReference>
<dbReference type="GO" id="GO:0046872">
    <property type="term" value="F:metal ion binding"/>
    <property type="evidence" value="ECO:0007669"/>
    <property type="project" value="UniProtKB-KW"/>
</dbReference>
<dbReference type="GO" id="GO:0006744">
    <property type="term" value="P:ubiquinone biosynthetic process"/>
    <property type="evidence" value="ECO:0007669"/>
    <property type="project" value="UniProtKB-UniRule"/>
</dbReference>
<dbReference type="FunFam" id="1.20.5.570:FF:000001">
    <property type="entry name" value="3-octaprenyl-4-hydroxybenzoate carboxy-lyase"/>
    <property type="match status" value="1"/>
</dbReference>
<dbReference type="FunFam" id="3.40.1670.10:FF:000001">
    <property type="entry name" value="3-octaprenyl-4-hydroxybenzoate carboxy-lyase"/>
    <property type="match status" value="1"/>
</dbReference>
<dbReference type="Gene3D" id="1.20.5.570">
    <property type="entry name" value="Single helix bin"/>
    <property type="match status" value="1"/>
</dbReference>
<dbReference type="Gene3D" id="3.40.1670.10">
    <property type="entry name" value="UbiD C-terminal domain-like"/>
    <property type="match status" value="1"/>
</dbReference>
<dbReference type="HAMAP" id="MF_01636">
    <property type="entry name" value="UbiD"/>
    <property type="match status" value="1"/>
</dbReference>
<dbReference type="InterPro" id="IPR002830">
    <property type="entry name" value="UbiD"/>
</dbReference>
<dbReference type="InterPro" id="IPR049381">
    <property type="entry name" value="UbiD-like_C"/>
</dbReference>
<dbReference type="InterPro" id="IPR049383">
    <property type="entry name" value="UbiD-like_N"/>
</dbReference>
<dbReference type="InterPro" id="IPR023677">
    <property type="entry name" value="UbiD_bacteria"/>
</dbReference>
<dbReference type="InterPro" id="IPR048304">
    <property type="entry name" value="UbiD_Rift_dom"/>
</dbReference>
<dbReference type="NCBIfam" id="NF008175">
    <property type="entry name" value="PRK10922.1"/>
    <property type="match status" value="1"/>
</dbReference>
<dbReference type="NCBIfam" id="TIGR00148">
    <property type="entry name" value="UbiD family decarboxylase"/>
    <property type="match status" value="1"/>
</dbReference>
<dbReference type="PANTHER" id="PTHR30108">
    <property type="entry name" value="3-OCTAPRENYL-4-HYDROXYBENZOATE CARBOXY-LYASE-RELATED"/>
    <property type="match status" value="1"/>
</dbReference>
<dbReference type="PANTHER" id="PTHR30108:SF17">
    <property type="entry name" value="FERULIC ACID DECARBOXYLASE 1"/>
    <property type="match status" value="1"/>
</dbReference>
<dbReference type="Pfam" id="PF01977">
    <property type="entry name" value="UbiD"/>
    <property type="match status" value="1"/>
</dbReference>
<dbReference type="Pfam" id="PF20696">
    <property type="entry name" value="UbiD_C"/>
    <property type="match status" value="1"/>
</dbReference>
<dbReference type="Pfam" id="PF20695">
    <property type="entry name" value="UbiD_N"/>
    <property type="match status" value="1"/>
</dbReference>
<dbReference type="SUPFAM" id="SSF50475">
    <property type="entry name" value="FMN-binding split barrel"/>
    <property type="match status" value="1"/>
</dbReference>
<dbReference type="SUPFAM" id="SSF143968">
    <property type="entry name" value="UbiD C-terminal domain-like"/>
    <property type="match status" value="1"/>
</dbReference>